<name>MURA_VIBC3</name>
<evidence type="ECO:0000255" key="1">
    <source>
        <dbReference type="HAMAP-Rule" id="MF_00111"/>
    </source>
</evidence>
<accession>A5F5B4</accession>
<accession>C3M503</accession>
<dbReference type="EC" id="2.5.1.7" evidence="1"/>
<dbReference type="EMBL" id="CP000627">
    <property type="protein sequence ID" value="ABQ20696.1"/>
    <property type="molecule type" value="Genomic_DNA"/>
</dbReference>
<dbReference type="EMBL" id="CP001235">
    <property type="protein sequence ID" value="ACP10614.1"/>
    <property type="molecule type" value="Genomic_DNA"/>
</dbReference>
<dbReference type="RefSeq" id="WP_000410586.1">
    <property type="nucleotide sequence ID" value="NZ_JAACZH010000021.1"/>
</dbReference>
<dbReference type="SMR" id="A5F5B4"/>
<dbReference type="GeneID" id="69718877"/>
<dbReference type="KEGG" id="vco:VC0395_A2096"/>
<dbReference type="KEGG" id="vcr:VC395_2628"/>
<dbReference type="PATRIC" id="fig|345073.21.peg.2530"/>
<dbReference type="eggNOG" id="COG0766">
    <property type="taxonomic scope" value="Bacteria"/>
</dbReference>
<dbReference type="HOGENOM" id="CLU_027387_0_0_6"/>
<dbReference type="OrthoDB" id="9803760at2"/>
<dbReference type="UniPathway" id="UPA00219"/>
<dbReference type="Proteomes" id="UP000000249">
    <property type="component" value="Chromosome 2"/>
</dbReference>
<dbReference type="GO" id="GO:0005737">
    <property type="term" value="C:cytoplasm"/>
    <property type="evidence" value="ECO:0007669"/>
    <property type="project" value="UniProtKB-SubCell"/>
</dbReference>
<dbReference type="GO" id="GO:0008760">
    <property type="term" value="F:UDP-N-acetylglucosamine 1-carboxyvinyltransferase activity"/>
    <property type="evidence" value="ECO:0007669"/>
    <property type="project" value="UniProtKB-UniRule"/>
</dbReference>
<dbReference type="GO" id="GO:0051301">
    <property type="term" value="P:cell division"/>
    <property type="evidence" value="ECO:0007669"/>
    <property type="project" value="UniProtKB-KW"/>
</dbReference>
<dbReference type="GO" id="GO:0071555">
    <property type="term" value="P:cell wall organization"/>
    <property type="evidence" value="ECO:0007669"/>
    <property type="project" value="UniProtKB-KW"/>
</dbReference>
<dbReference type="GO" id="GO:0009252">
    <property type="term" value="P:peptidoglycan biosynthetic process"/>
    <property type="evidence" value="ECO:0007669"/>
    <property type="project" value="UniProtKB-UniRule"/>
</dbReference>
<dbReference type="GO" id="GO:0008360">
    <property type="term" value="P:regulation of cell shape"/>
    <property type="evidence" value="ECO:0007669"/>
    <property type="project" value="UniProtKB-KW"/>
</dbReference>
<dbReference type="GO" id="GO:0019277">
    <property type="term" value="P:UDP-N-acetylgalactosamine biosynthetic process"/>
    <property type="evidence" value="ECO:0007669"/>
    <property type="project" value="InterPro"/>
</dbReference>
<dbReference type="CDD" id="cd01555">
    <property type="entry name" value="UdpNAET"/>
    <property type="match status" value="1"/>
</dbReference>
<dbReference type="FunFam" id="3.65.10.10:FF:000002">
    <property type="entry name" value="UDP-N-acetylglucosamine 1-carboxyvinyltransferase"/>
    <property type="match status" value="1"/>
</dbReference>
<dbReference type="Gene3D" id="3.65.10.10">
    <property type="entry name" value="Enolpyruvate transferase domain"/>
    <property type="match status" value="2"/>
</dbReference>
<dbReference type="HAMAP" id="MF_00111">
    <property type="entry name" value="MurA"/>
    <property type="match status" value="1"/>
</dbReference>
<dbReference type="InterPro" id="IPR001986">
    <property type="entry name" value="Enolpyruvate_Tfrase_dom"/>
</dbReference>
<dbReference type="InterPro" id="IPR036968">
    <property type="entry name" value="Enolpyruvate_Tfrase_sf"/>
</dbReference>
<dbReference type="InterPro" id="IPR050068">
    <property type="entry name" value="MurA_subfamily"/>
</dbReference>
<dbReference type="InterPro" id="IPR013792">
    <property type="entry name" value="RNA3'P_cycl/enolpyr_Trfase_a/b"/>
</dbReference>
<dbReference type="InterPro" id="IPR005750">
    <property type="entry name" value="UDP_GlcNAc_COvinyl_MurA"/>
</dbReference>
<dbReference type="NCBIfam" id="TIGR01072">
    <property type="entry name" value="murA"/>
    <property type="match status" value="1"/>
</dbReference>
<dbReference type="NCBIfam" id="NF006873">
    <property type="entry name" value="PRK09369.1"/>
    <property type="match status" value="1"/>
</dbReference>
<dbReference type="PANTHER" id="PTHR43783">
    <property type="entry name" value="UDP-N-ACETYLGLUCOSAMINE 1-CARBOXYVINYLTRANSFERASE"/>
    <property type="match status" value="1"/>
</dbReference>
<dbReference type="PANTHER" id="PTHR43783:SF1">
    <property type="entry name" value="UDP-N-ACETYLGLUCOSAMINE 1-CARBOXYVINYLTRANSFERASE"/>
    <property type="match status" value="1"/>
</dbReference>
<dbReference type="Pfam" id="PF00275">
    <property type="entry name" value="EPSP_synthase"/>
    <property type="match status" value="1"/>
</dbReference>
<dbReference type="SUPFAM" id="SSF55205">
    <property type="entry name" value="EPT/RTPC-like"/>
    <property type="match status" value="1"/>
</dbReference>
<protein>
    <recommendedName>
        <fullName evidence="1">UDP-N-acetylglucosamine 1-carboxyvinyltransferase</fullName>
        <ecNumber evidence="1">2.5.1.7</ecNumber>
    </recommendedName>
    <alternativeName>
        <fullName evidence="1">Enoylpyruvate transferase</fullName>
    </alternativeName>
    <alternativeName>
        <fullName evidence="1">UDP-N-acetylglucosamine enolpyruvyl transferase</fullName>
        <shortName evidence="1">EPT</shortName>
    </alternativeName>
</protein>
<sequence>MEKFRVIGSTQPLQGEVTISGAKNAALPILFASILAEEPVEVANVPHLRDIDTTMELLERLGAKVERNGSVHVDAGPINQYCAPYDLVKTMRASIWALGPLVARFGQGQVSLPGGCAIGARPVDLHIHGLEQLGATITLEDGYVKAHVDGRLQGAHIVMDKVSVGATITIMCAATLAEGTTVLDNAAREPEIVDTAMFLNKLGAKISGAGTDSITIEGVERLGGGKHAVVPDRIETGTFLVAAAVSRGKIVCRNTHAHLLEAVLAKLEEAGAEIECGEDWISLDMTGRELKAVTVRTAPHPGFPTDMQAQFTLLNMMAKGGGVITETIFENRFMHVPELKRMGAKAEIEGNTVICGDVDRLSGAQVMATDLRASASLVIAGCIAKGETIVDRIYHIDRGYERIEDKLSALGANIERFRD</sequence>
<comment type="function">
    <text evidence="1">Cell wall formation. Adds enolpyruvyl to UDP-N-acetylglucosamine.</text>
</comment>
<comment type="catalytic activity">
    <reaction evidence="1">
        <text>phosphoenolpyruvate + UDP-N-acetyl-alpha-D-glucosamine = UDP-N-acetyl-3-O-(1-carboxyvinyl)-alpha-D-glucosamine + phosphate</text>
        <dbReference type="Rhea" id="RHEA:18681"/>
        <dbReference type="ChEBI" id="CHEBI:43474"/>
        <dbReference type="ChEBI" id="CHEBI:57705"/>
        <dbReference type="ChEBI" id="CHEBI:58702"/>
        <dbReference type="ChEBI" id="CHEBI:68483"/>
        <dbReference type="EC" id="2.5.1.7"/>
    </reaction>
</comment>
<comment type="pathway">
    <text evidence="1">Cell wall biogenesis; peptidoglycan biosynthesis.</text>
</comment>
<comment type="subcellular location">
    <subcellularLocation>
        <location evidence="1">Cytoplasm</location>
    </subcellularLocation>
</comment>
<comment type="similarity">
    <text evidence="1">Belongs to the EPSP synthase family. MurA subfamily.</text>
</comment>
<gene>
    <name evidence="1" type="primary">murA</name>
    <name type="ordered locus">VC0395_A2096</name>
    <name type="ordered locus">VC395_2628</name>
</gene>
<organism>
    <name type="scientific">Vibrio cholerae serotype O1 (strain ATCC 39541 / Classical Ogawa 395 / O395)</name>
    <dbReference type="NCBI Taxonomy" id="345073"/>
    <lineage>
        <taxon>Bacteria</taxon>
        <taxon>Pseudomonadati</taxon>
        <taxon>Pseudomonadota</taxon>
        <taxon>Gammaproteobacteria</taxon>
        <taxon>Vibrionales</taxon>
        <taxon>Vibrionaceae</taxon>
        <taxon>Vibrio</taxon>
    </lineage>
</organism>
<feature type="chain" id="PRO_1000071332" description="UDP-N-acetylglucosamine 1-carboxyvinyltransferase">
    <location>
        <begin position="1"/>
        <end position="419"/>
    </location>
</feature>
<feature type="active site" description="Proton donor" evidence="1">
    <location>
        <position position="116"/>
    </location>
</feature>
<feature type="binding site" evidence="1">
    <location>
        <begin position="23"/>
        <end position="24"/>
    </location>
    <ligand>
        <name>phosphoenolpyruvate</name>
        <dbReference type="ChEBI" id="CHEBI:58702"/>
    </ligand>
</feature>
<feature type="binding site" evidence="1">
    <location>
        <position position="92"/>
    </location>
    <ligand>
        <name>UDP-N-acetyl-alpha-D-glucosamine</name>
        <dbReference type="ChEBI" id="CHEBI:57705"/>
    </ligand>
</feature>
<feature type="binding site" evidence="1">
    <location>
        <begin position="121"/>
        <end position="125"/>
    </location>
    <ligand>
        <name>UDP-N-acetyl-alpha-D-glucosamine</name>
        <dbReference type="ChEBI" id="CHEBI:57705"/>
    </ligand>
</feature>
<feature type="binding site" evidence="1">
    <location>
        <begin position="161"/>
        <end position="164"/>
    </location>
    <ligand>
        <name>UDP-N-acetyl-alpha-D-glucosamine</name>
        <dbReference type="ChEBI" id="CHEBI:57705"/>
    </ligand>
</feature>
<feature type="binding site" evidence="1">
    <location>
        <position position="306"/>
    </location>
    <ligand>
        <name>UDP-N-acetyl-alpha-D-glucosamine</name>
        <dbReference type="ChEBI" id="CHEBI:57705"/>
    </ligand>
</feature>
<feature type="binding site" evidence="1">
    <location>
        <position position="328"/>
    </location>
    <ligand>
        <name>UDP-N-acetyl-alpha-D-glucosamine</name>
        <dbReference type="ChEBI" id="CHEBI:57705"/>
    </ligand>
</feature>
<feature type="modified residue" description="2-(S-cysteinyl)pyruvic acid O-phosphothioketal" evidence="1">
    <location>
        <position position="116"/>
    </location>
</feature>
<keyword id="KW-0131">Cell cycle</keyword>
<keyword id="KW-0132">Cell division</keyword>
<keyword id="KW-0133">Cell shape</keyword>
<keyword id="KW-0961">Cell wall biogenesis/degradation</keyword>
<keyword id="KW-0963">Cytoplasm</keyword>
<keyword id="KW-0573">Peptidoglycan synthesis</keyword>
<keyword id="KW-0670">Pyruvate</keyword>
<keyword id="KW-0808">Transferase</keyword>
<reference key="1">
    <citation type="submission" date="2007-03" db="EMBL/GenBank/DDBJ databases">
        <authorList>
            <person name="Heidelberg J."/>
        </authorList>
    </citation>
    <scope>NUCLEOTIDE SEQUENCE [LARGE SCALE GENOMIC DNA]</scope>
    <source>
        <strain>ATCC 39541 / Classical Ogawa 395 / O395</strain>
    </source>
</reference>
<reference key="2">
    <citation type="journal article" date="2008" name="PLoS ONE">
        <title>A recalibrated molecular clock and independent origins for the cholera pandemic clones.</title>
        <authorList>
            <person name="Feng L."/>
            <person name="Reeves P.R."/>
            <person name="Lan R."/>
            <person name="Ren Y."/>
            <person name="Gao C."/>
            <person name="Zhou Z."/>
            <person name="Ren Y."/>
            <person name="Cheng J."/>
            <person name="Wang W."/>
            <person name="Wang J."/>
            <person name="Qian W."/>
            <person name="Li D."/>
            <person name="Wang L."/>
        </authorList>
    </citation>
    <scope>NUCLEOTIDE SEQUENCE [LARGE SCALE GENOMIC DNA]</scope>
    <source>
        <strain>ATCC 39541 / Classical Ogawa 395 / O395</strain>
    </source>
</reference>
<proteinExistence type="inferred from homology"/>